<organism>
    <name type="scientific">Methanoregula boonei (strain DSM 21154 / JCM 14090 / 6A8)</name>
    <dbReference type="NCBI Taxonomy" id="456442"/>
    <lineage>
        <taxon>Archaea</taxon>
        <taxon>Methanobacteriati</taxon>
        <taxon>Methanobacteriota</taxon>
        <taxon>Stenosarchaea group</taxon>
        <taxon>Methanomicrobia</taxon>
        <taxon>Methanomicrobiales</taxon>
        <taxon>Methanoregulaceae</taxon>
        <taxon>Methanoregula</taxon>
    </lineage>
</organism>
<accession>A7I472</accession>
<keyword id="KW-0315">Glutamine amidotransferase</keyword>
<keyword id="KW-0378">Hydrolase</keyword>
<keyword id="KW-0456">Lyase</keyword>
<keyword id="KW-0663">Pyridoxal phosphate</keyword>
<keyword id="KW-1185">Reference proteome</keyword>
<name>PDXT_METB6</name>
<sequence>MKVGVLALQGDVSEHIDAFTAALRKRGYTEDSPVIEVRNPEDLAGCAALAIPGGESTTISRLVDKNGLYKPIRDFKGGIFATCAGMILMATDVGDPRVHSLGLLDMTVDRNAFGRQRESFEADIRVQGLDGGSFHAVFIRGPVVTEARDGVVVLARTDKGIVAVEKGRHMALAFHPELGGDLRLHERFLKNLGV</sequence>
<proteinExistence type="inferred from homology"/>
<gene>
    <name evidence="1" type="primary">pdxT</name>
    <name type="ordered locus">Mboo_0009</name>
</gene>
<comment type="function">
    <text evidence="1">Catalyzes the hydrolysis of glutamine to glutamate and ammonia as part of the biosynthesis of pyridoxal 5'-phosphate. The resulting ammonia molecule is channeled to the active site of PdxS.</text>
</comment>
<comment type="catalytic activity">
    <reaction evidence="1">
        <text>aldehydo-D-ribose 5-phosphate + D-glyceraldehyde 3-phosphate + L-glutamine = pyridoxal 5'-phosphate + L-glutamate + phosphate + 3 H2O + H(+)</text>
        <dbReference type="Rhea" id="RHEA:31507"/>
        <dbReference type="ChEBI" id="CHEBI:15377"/>
        <dbReference type="ChEBI" id="CHEBI:15378"/>
        <dbReference type="ChEBI" id="CHEBI:29985"/>
        <dbReference type="ChEBI" id="CHEBI:43474"/>
        <dbReference type="ChEBI" id="CHEBI:58273"/>
        <dbReference type="ChEBI" id="CHEBI:58359"/>
        <dbReference type="ChEBI" id="CHEBI:59776"/>
        <dbReference type="ChEBI" id="CHEBI:597326"/>
        <dbReference type="EC" id="4.3.3.6"/>
    </reaction>
</comment>
<comment type="catalytic activity">
    <reaction evidence="1">
        <text>L-glutamine + H2O = L-glutamate + NH4(+)</text>
        <dbReference type="Rhea" id="RHEA:15889"/>
        <dbReference type="ChEBI" id="CHEBI:15377"/>
        <dbReference type="ChEBI" id="CHEBI:28938"/>
        <dbReference type="ChEBI" id="CHEBI:29985"/>
        <dbReference type="ChEBI" id="CHEBI:58359"/>
        <dbReference type="EC" id="3.5.1.2"/>
    </reaction>
</comment>
<comment type="pathway">
    <text evidence="1">Cofactor biosynthesis; pyridoxal 5'-phosphate biosynthesis.</text>
</comment>
<comment type="subunit">
    <text evidence="1">In the presence of PdxS, forms a dodecamer of heterodimers. Only shows activity in the heterodimer.</text>
</comment>
<comment type="similarity">
    <text evidence="1">Belongs to the glutaminase PdxT/SNO family.</text>
</comment>
<evidence type="ECO:0000255" key="1">
    <source>
        <dbReference type="HAMAP-Rule" id="MF_01615"/>
    </source>
</evidence>
<dbReference type="EC" id="4.3.3.6" evidence="1"/>
<dbReference type="EC" id="3.5.1.2" evidence="1"/>
<dbReference type="EMBL" id="CP000780">
    <property type="protein sequence ID" value="ABS54533.1"/>
    <property type="molecule type" value="Genomic_DNA"/>
</dbReference>
<dbReference type="SMR" id="A7I472"/>
<dbReference type="STRING" id="456442.Mboo_0009"/>
<dbReference type="KEGG" id="mbn:Mboo_0009"/>
<dbReference type="eggNOG" id="arCOG00034">
    <property type="taxonomic scope" value="Archaea"/>
</dbReference>
<dbReference type="HOGENOM" id="CLU_069674_2_0_2"/>
<dbReference type="UniPathway" id="UPA00245"/>
<dbReference type="Proteomes" id="UP000002408">
    <property type="component" value="Chromosome"/>
</dbReference>
<dbReference type="GO" id="GO:0005829">
    <property type="term" value="C:cytosol"/>
    <property type="evidence" value="ECO:0007669"/>
    <property type="project" value="TreeGrafter"/>
</dbReference>
<dbReference type="GO" id="GO:1903600">
    <property type="term" value="C:glutaminase complex"/>
    <property type="evidence" value="ECO:0007669"/>
    <property type="project" value="TreeGrafter"/>
</dbReference>
<dbReference type="GO" id="GO:0004359">
    <property type="term" value="F:glutaminase activity"/>
    <property type="evidence" value="ECO:0007669"/>
    <property type="project" value="UniProtKB-UniRule"/>
</dbReference>
<dbReference type="GO" id="GO:0036381">
    <property type="term" value="F:pyridoxal 5'-phosphate synthase (glutamine hydrolysing) activity"/>
    <property type="evidence" value="ECO:0007669"/>
    <property type="project" value="UniProtKB-UniRule"/>
</dbReference>
<dbReference type="GO" id="GO:0006543">
    <property type="term" value="P:glutamine catabolic process"/>
    <property type="evidence" value="ECO:0007669"/>
    <property type="project" value="UniProtKB-UniRule"/>
</dbReference>
<dbReference type="GO" id="GO:0042823">
    <property type="term" value="P:pyridoxal phosphate biosynthetic process"/>
    <property type="evidence" value="ECO:0007669"/>
    <property type="project" value="UniProtKB-UniRule"/>
</dbReference>
<dbReference type="GO" id="GO:0008614">
    <property type="term" value="P:pyridoxine metabolic process"/>
    <property type="evidence" value="ECO:0007669"/>
    <property type="project" value="TreeGrafter"/>
</dbReference>
<dbReference type="CDD" id="cd01749">
    <property type="entry name" value="GATase1_PB"/>
    <property type="match status" value="1"/>
</dbReference>
<dbReference type="FunFam" id="3.40.50.880:FF:000010">
    <property type="entry name" value="uncharacterized protein LOC100176842 isoform X2"/>
    <property type="match status" value="1"/>
</dbReference>
<dbReference type="Gene3D" id="3.40.50.880">
    <property type="match status" value="1"/>
</dbReference>
<dbReference type="HAMAP" id="MF_01615">
    <property type="entry name" value="PdxT"/>
    <property type="match status" value="1"/>
</dbReference>
<dbReference type="InterPro" id="IPR029062">
    <property type="entry name" value="Class_I_gatase-like"/>
</dbReference>
<dbReference type="InterPro" id="IPR002161">
    <property type="entry name" value="PdxT/SNO"/>
</dbReference>
<dbReference type="InterPro" id="IPR021196">
    <property type="entry name" value="PdxT/SNO_CS"/>
</dbReference>
<dbReference type="NCBIfam" id="TIGR03800">
    <property type="entry name" value="PLP_synth_Pdx2"/>
    <property type="match status" value="1"/>
</dbReference>
<dbReference type="PANTHER" id="PTHR31559">
    <property type="entry name" value="PYRIDOXAL 5'-PHOSPHATE SYNTHASE SUBUNIT SNO"/>
    <property type="match status" value="1"/>
</dbReference>
<dbReference type="PANTHER" id="PTHR31559:SF0">
    <property type="entry name" value="PYRIDOXAL 5'-PHOSPHATE SYNTHASE SUBUNIT SNO1-RELATED"/>
    <property type="match status" value="1"/>
</dbReference>
<dbReference type="Pfam" id="PF01174">
    <property type="entry name" value="SNO"/>
    <property type="match status" value="1"/>
</dbReference>
<dbReference type="PIRSF" id="PIRSF005639">
    <property type="entry name" value="Glut_amidoT_SNO"/>
    <property type="match status" value="1"/>
</dbReference>
<dbReference type="SUPFAM" id="SSF52317">
    <property type="entry name" value="Class I glutamine amidotransferase-like"/>
    <property type="match status" value="1"/>
</dbReference>
<dbReference type="PROSITE" id="PS01236">
    <property type="entry name" value="PDXT_SNO_1"/>
    <property type="match status" value="1"/>
</dbReference>
<dbReference type="PROSITE" id="PS51130">
    <property type="entry name" value="PDXT_SNO_2"/>
    <property type="match status" value="1"/>
</dbReference>
<reference key="1">
    <citation type="journal article" date="2015" name="Microbiology">
        <title>Genome of Methanoregula boonei 6A8 reveals adaptations to oligotrophic peatland environments.</title>
        <authorList>
            <person name="Braeuer S."/>
            <person name="Cadillo-Quiroz H."/>
            <person name="Kyrpides N."/>
            <person name="Woyke T."/>
            <person name="Goodwin L."/>
            <person name="Detter C."/>
            <person name="Podell S."/>
            <person name="Yavitt J.B."/>
            <person name="Zinder S.H."/>
        </authorList>
    </citation>
    <scope>NUCLEOTIDE SEQUENCE [LARGE SCALE GENOMIC DNA]</scope>
    <source>
        <strain>DSM 21154 / JCM 14090 / 6A8</strain>
    </source>
</reference>
<protein>
    <recommendedName>
        <fullName evidence="1">Pyridoxal 5'-phosphate synthase subunit PdxT</fullName>
        <ecNumber evidence="1">4.3.3.6</ecNumber>
    </recommendedName>
    <alternativeName>
        <fullName evidence="1">Pdx2</fullName>
    </alternativeName>
    <alternativeName>
        <fullName evidence="1">Pyridoxal 5'-phosphate synthase glutaminase subunit</fullName>
        <ecNumber evidence="1">3.5.1.2</ecNumber>
    </alternativeName>
</protein>
<feature type="chain" id="PRO_0000335576" description="Pyridoxal 5'-phosphate synthase subunit PdxT">
    <location>
        <begin position="1"/>
        <end position="194"/>
    </location>
</feature>
<feature type="active site" description="Nucleophile" evidence="1">
    <location>
        <position position="83"/>
    </location>
</feature>
<feature type="active site" description="Charge relay system" evidence="1">
    <location>
        <position position="175"/>
    </location>
</feature>
<feature type="active site" description="Charge relay system" evidence="1">
    <location>
        <position position="177"/>
    </location>
</feature>
<feature type="binding site" evidence="1">
    <location>
        <begin position="54"/>
        <end position="56"/>
    </location>
    <ligand>
        <name>L-glutamine</name>
        <dbReference type="ChEBI" id="CHEBI:58359"/>
    </ligand>
</feature>
<feature type="binding site" evidence="1">
    <location>
        <position position="110"/>
    </location>
    <ligand>
        <name>L-glutamine</name>
        <dbReference type="ChEBI" id="CHEBI:58359"/>
    </ligand>
</feature>
<feature type="binding site" evidence="1">
    <location>
        <begin position="139"/>
        <end position="140"/>
    </location>
    <ligand>
        <name>L-glutamine</name>
        <dbReference type="ChEBI" id="CHEBI:58359"/>
    </ligand>
</feature>